<sequence length="94" mass="10056">MLKPLGDRVVIELVQAEEKTASGIVLPDTAKEKPQEGKVVAVGTGRVLENGERVALEVAAGDLIIFSKYAGTEVKYEGTDYLILRESDILAVIG</sequence>
<dbReference type="EMBL" id="CP001186">
    <property type="protein sequence ID" value="ACK93695.1"/>
    <property type="molecule type" value="Genomic_DNA"/>
</dbReference>
<dbReference type="RefSeq" id="WP_000917311.1">
    <property type="nucleotide sequence ID" value="NC_011772.1"/>
</dbReference>
<dbReference type="SMR" id="B7IUS9"/>
<dbReference type="GeneID" id="72447091"/>
<dbReference type="KEGG" id="bcg:BCG9842_B5027"/>
<dbReference type="HOGENOM" id="CLU_132825_2_0_9"/>
<dbReference type="Proteomes" id="UP000006744">
    <property type="component" value="Chromosome"/>
</dbReference>
<dbReference type="GO" id="GO:0005737">
    <property type="term" value="C:cytoplasm"/>
    <property type="evidence" value="ECO:0007669"/>
    <property type="project" value="UniProtKB-SubCell"/>
</dbReference>
<dbReference type="GO" id="GO:0005524">
    <property type="term" value="F:ATP binding"/>
    <property type="evidence" value="ECO:0007669"/>
    <property type="project" value="InterPro"/>
</dbReference>
<dbReference type="GO" id="GO:0046872">
    <property type="term" value="F:metal ion binding"/>
    <property type="evidence" value="ECO:0007669"/>
    <property type="project" value="TreeGrafter"/>
</dbReference>
<dbReference type="GO" id="GO:0044183">
    <property type="term" value="F:protein folding chaperone"/>
    <property type="evidence" value="ECO:0007669"/>
    <property type="project" value="InterPro"/>
</dbReference>
<dbReference type="GO" id="GO:0051087">
    <property type="term" value="F:protein-folding chaperone binding"/>
    <property type="evidence" value="ECO:0007669"/>
    <property type="project" value="TreeGrafter"/>
</dbReference>
<dbReference type="GO" id="GO:0051082">
    <property type="term" value="F:unfolded protein binding"/>
    <property type="evidence" value="ECO:0007669"/>
    <property type="project" value="TreeGrafter"/>
</dbReference>
<dbReference type="GO" id="GO:0051085">
    <property type="term" value="P:chaperone cofactor-dependent protein refolding"/>
    <property type="evidence" value="ECO:0007669"/>
    <property type="project" value="TreeGrafter"/>
</dbReference>
<dbReference type="CDD" id="cd00320">
    <property type="entry name" value="cpn10"/>
    <property type="match status" value="1"/>
</dbReference>
<dbReference type="FunFam" id="2.30.33.40:FF:000001">
    <property type="entry name" value="10 kDa chaperonin"/>
    <property type="match status" value="1"/>
</dbReference>
<dbReference type="Gene3D" id="2.30.33.40">
    <property type="entry name" value="GroES chaperonin"/>
    <property type="match status" value="1"/>
</dbReference>
<dbReference type="HAMAP" id="MF_00580">
    <property type="entry name" value="CH10"/>
    <property type="match status" value="1"/>
</dbReference>
<dbReference type="InterPro" id="IPR020818">
    <property type="entry name" value="Chaperonin_GroES"/>
</dbReference>
<dbReference type="InterPro" id="IPR037124">
    <property type="entry name" value="Chaperonin_GroES_sf"/>
</dbReference>
<dbReference type="InterPro" id="IPR018369">
    <property type="entry name" value="Chaprnonin_Cpn10_CS"/>
</dbReference>
<dbReference type="InterPro" id="IPR011032">
    <property type="entry name" value="GroES-like_sf"/>
</dbReference>
<dbReference type="NCBIfam" id="NF001527">
    <property type="entry name" value="PRK00364.1-2"/>
    <property type="match status" value="1"/>
</dbReference>
<dbReference type="NCBIfam" id="NF001530">
    <property type="entry name" value="PRK00364.1-6"/>
    <property type="match status" value="1"/>
</dbReference>
<dbReference type="NCBIfam" id="NF001531">
    <property type="entry name" value="PRK00364.2-2"/>
    <property type="match status" value="1"/>
</dbReference>
<dbReference type="NCBIfam" id="NF001533">
    <property type="entry name" value="PRK00364.2-4"/>
    <property type="match status" value="1"/>
</dbReference>
<dbReference type="NCBIfam" id="NF001534">
    <property type="entry name" value="PRK00364.2-5"/>
    <property type="match status" value="1"/>
</dbReference>
<dbReference type="PANTHER" id="PTHR10772">
    <property type="entry name" value="10 KDA HEAT SHOCK PROTEIN"/>
    <property type="match status" value="1"/>
</dbReference>
<dbReference type="PANTHER" id="PTHR10772:SF58">
    <property type="entry name" value="CO-CHAPERONIN GROES"/>
    <property type="match status" value="1"/>
</dbReference>
<dbReference type="Pfam" id="PF00166">
    <property type="entry name" value="Cpn10"/>
    <property type="match status" value="1"/>
</dbReference>
<dbReference type="PRINTS" id="PR00297">
    <property type="entry name" value="CHAPERONIN10"/>
</dbReference>
<dbReference type="SMART" id="SM00883">
    <property type="entry name" value="Cpn10"/>
    <property type="match status" value="1"/>
</dbReference>
<dbReference type="SUPFAM" id="SSF50129">
    <property type="entry name" value="GroES-like"/>
    <property type="match status" value="1"/>
</dbReference>
<dbReference type="PROSITE" id="PS00681">
    <property type="entry name" value="CHAPERONINS_CPN10"/>
    <property type="match status" value="1"/>
</dbReference>
<proteinExistence type="inferred from homology"/>
<gene>
    <name evidence="1" type="primary">groES</name>
    <name evidence="1" type="synonym">groS</name>
    <name type="ordered locus">BCG9842_B5027</name>
</gene>
<protein>
    <recommendedName>
        <fullName evidence="1">Co-chaperonin GroES</fullName>
    </recommendedName>
    <alternativeName>
        <fullName evidence="1">10 kDa chaperonin</fullName>
    </alternativeName>
    <alternativeName>
        <fullName evidence="1">Chaperonin-10</fullName>
        <shortName evidence="1">Cpn10</shortName>
    </alternativeName>
</protein>
<feature type="chain" id="PRO_1000129623" description="Co-chaperonin GroES">
    <location>
        <begin position="1"/>
        <end position="94"/>
    </location>
</feature>
<evidence type="ECO:0000255" key="1">
    <source>
        <dbReference type="HAMAP-Rule" id="MF_00580"/>
    </source>
</evidence>
<name>CH10_BACC2</name>
<keyword id="KW-0143">Chaperone</keyword>
<keyword id="KW-0963">Cytoplasm</keyword>
<organism>
    <name type="scientific">Bacillus cereus (strain G9842)</name>
    <dbReference type="NCBI Taxonomy" id="405531"/>
    <lineage>
        <taxon>Bacteria</taxon>
        <taxon>Bacillati</taxon>
        <taxon>Bacillota</taxon>
        <taxon>Bacilli</taxon>
        <taxon>Bacillales</taxon>
        <taxon>Bacillaceae</taxon>
        <taxon>Bacillus</taxon>
        <taxon>Bacillus cereus group</taxon>
    </lineage>
</organism>
<reference key="1">
    <citation type="submission" date="2008-10" db="EMBL/GenBank/DDBJ databases">
        <title>Genome sequence of Bacillus cereus G9842.</title>
        <authorList>
            <person name="Dodson R.J."/>
            <person name="Durkin A.S."/>
            <person name="Rosovitz M.J."/>
            <person name="Rasko D.A."/>
            <person name="Hoffmaster A."/>
            <person name="Ravel J."/>
            <person name="Sutton G."/>
        </authorList>
    </citation>
    <scope>NUCLEOTIDE SEQUENCE [LARGE SCALE GENOMIC DNA]</scope>
    <source>
        <strain>G9842</strain>
    </source>
</reference>
<comment type="function">
    <text evidence="1">Together with the chaperonin GroEL, plays an essential role in assisting protein folding. The GroEL-GroES system forms a nano-cage that allows encapsulation of the non-native substrate proteins and provides a physical environment optimized to promote and accelerate protein folding. GroES binds to the apical surface of the GroEL ring, thereby capping the opening of the GroEL channel.</text>
</comment>
<comment type="subunit">
    <text evidence="1">Heptamer of 7 subunits arranged in a ring. Interacts with the chaperonin GroEL.</text>
</comment>
<comment type="subcellular location">
    <subcellularLocation>
        <location evidence="1">Cytoplasm</location>
    </subcellularLocation>
</comment>
<comment type="similarity">
    <text evidence="1">Belongs to the GroES chaperonin family.</text>
</comment>
<accession>B7IUS9</accession>